<sequence>MDRNKEIFEESKKYMPGGVNSPVRSFGSVGINPPVIKSGKGAMIKDENGNEYIDFVLAWGPMILGHCDEDVVEAIKKTSEESIAFGASTKLELDLAKILCETLDNVDMIRMVNSGTEATMSAVKLARGYTKKDKIIKFAGCYHGHFDGFLIEAGSGVLTEGIPGCLGVPEESIKNTLIGIYNDEKQVEELFEKYGNDIAGIIIEPVAGNMGVVKCDPKFMRKLRELCDKYEALLIFDEVMCGFRVAYKGAQTLFDVKPDLVTYAKIMGGGLPCGAYGGRREIMENLSPLGGVYQAGTMSGNPIVMSAGLATVKKLYENPSYYDHIEKIGSKLEKGIIEIAKKKGLGLVVNRQGGMMTLFFTDLKEVKCYDDVKTCDGERFKRYFLHMLNKGFNIPPSQFEAMFLSVKHTEEHIDKFLEAFESFEG</sequence>
<keyword id="KW-0963">Cytoplasm</keyword>
<keyword id="KW-0413">Isomerase</keyword>
<keyword id="KW-0627">Porphyrin biosynthesis</keyword>
<keyword id="KW-0663">Pyridoxal phosphate</keyword>
<name>GSA_CLOPS</name>
<proteinExistence type="inferred from homology"/>
<organism>
    <name type="scientific">Clostridium perfringens (strain SM101 / Type A)</name>
    <dbReference type="NCBI Taxonomy" id="289380"/>
    <lineage>
        <taxon>Bacteria</taxon>
        <taxon>Bacillati</taxon>
        <taxon>Bacillota</taxon>
        <taxon>Clostridia</taxon>
        <taxon>Eubacteriales</taxon>
        <taxon>Clostridiaceae</taxon>
        <taxon>Clostridium</taxon>
    </lineage>
</organism>
<dbReference type="EC" id="5.4.3.8" evidence="1"/>
<dbReference type="EMBL" id="CP000312">
    <property type="protein sequence ID" value="ABG87795.1"/>
    <property type="molecule type" value="Genomic_DNA"/>
</dbReference>
<dbReference type="SMR" id="Q0ST19"/>
<dbReference type="KEGG" id="cpr:CPR_1419"/>
<dbReference type="UniPathway" id="UPA00251">
    <property type="reaction ID" value="UER00317"/>
</dbReference>
<dbReference type="Proteomes" id="UP000001824">
    <property type="component" value="Chromosome"/>
</dbReference>
<dbReference type="GO" id="GO:0005737">
    <property type="term" value="C:cytoplasm"/>
    <property type="evidence" value="ECO:0007669"/>
    <property type="project" value="UniProtKB-SubCell"/>
</dbReference>
<dbReference type="GO" id="GO:0042286">
    <property type="term" value="F:glutamate-1-semialdehyde 2,1-aminomutase activity"/>
    <property type="evidence" value="ECO:0007669"/>
    <property type="project" value="UniProtKB-UniRule"/>
</dbReference>
<dbReference type="GO" id="GO:0030170">
    <property type="term" value="F:pyridoxal phosphate binding"/>
    <property type="evidence" value="ECO:0007669"/>
    <property type="project" value="InterPro"/>
</dbReference>
<dbReference type="GO" id="GO:0008483">
    <property type="term" value="F:transaminase activity"/>
    <property type="evidence" value="ECO:0007669"/>
    <property type="project" value="InterPro"/>
</dbReference>
<dbReference type="GO" id="GO:0006782">
    <property type="term" value="P:protoporphyrinogen IX biosynthetic process"/>
    <property type="evidence" value="ECO:0007669"/>
    <property type="project" value="UniProtKB-UniRule"/>
</dbReference>
<dbReference type="CDD" id="cd00610">
    <property type="entry name" value="OAT_like"/>
    <property type="match status" value="1"/>
</dbReference>
<dbReference type="FunFam" id="3.40.640.10:FF:000021">
    <property type="entry name" value="Glutamate-1-semialdehyde 2,1-aminomutase"/>
    <property type="match status" value="1"/>
</dbReference>
<dbReference type="Gene3D" id="3.90.1150.10">
    <property type="entry name" value="Aspartate Aminotransferase, domain 1"/>
    <property type="match status" value="1"/>
</dbReference>
<dbReference type="Gene3D" id="3.40.640.10">
    <property type="entry name" value="Type I PLP-dependent aspartate aminotransferase-like (Major domain)"/>
    <property type="match status" value="1"/>
</dbReference>
<dbReference type="HAMAP" id="MF_00375">
    <property type="entry name" value="HemL_aminotrans_3"/>
    <property type="match status" value="1"/>
</dbReference>
<dbReference type="InterPro" id="IPR004639">
    <property type="entry name" value="4pyrrol_synth_GluAld_NH2Trfase"/>
</dbReference>
<dbReference type="InterPro" id="IPR005814">
    <property type="entry name" value="Aminotrans_3"/>
</dbReference>
<dbReference type="InterPro" id="IPR049704">
    <property type="entry name" value="Aminotrans_3_PPA_site"/>
</dbReference>
<dbReference type="InterPro" id="IPR015424">
    <property type="entry name" value="PyrdxlP-dep_Trfase"/>
</dbReference>
<dbReference type="InterPro" id="IPR015421">
    <property type="entry name" value="PyrdxlP-dep_Trfase_major"/>
</dbReference>
<dbReference type="InterPro" id="IPR015422">
    <property type="entry name" value="PyrdxlP-dep_Trfase_small"/>
</dbReference>
<dbReference type="NCBIfam" id="TIGR00713">
    <property type="entry name" value="hemL"/>
    <property type="match status" value="1"/>
</dbReference>
<dbReference type="NCBIfam" id="NF000818">
    <property type="entry name" value="PRK00062.1"/>
    <property type="match status" value="1"/>
</dbReference>
<dbReference type="PANTHER" id="PTHR43713">
    <property type="entry name" value="GLUTAMATE-1-SEMIALDEHYDE 2,1-AMINOMUTASE"/>
    <property type="match status" value="1"/>
</dbReference>
<dbReference type="PANTHER" id="PTHR43713:SF3">
    <property type="entry name" value="GLUTAMATE-1-SEMIALDEHYDE 2,1-AMINOMUTASE 1, CHLOROPLASTIC-RELATED"/>
    <property type="match status" value="1"/>
</dbReference>
<dbReference type="Pfam" id="PF00202">
    <property type="entry name" value="Aminotran_3"/>
    <property type="match status" value="1"/>
</dbReference>
<dbReference type="SUPFAM" id="SSF53383">
    <property type="entry name" value="PLP-dependent transferases"/>
    <property type="match status" value="1"/>
</dbReference>
<dbReference type="PROSITE" id="PS00600">
    <property type="entry name" value="AA_TRANSFER_CLASS_3"/>
    <property type="match status" value="1"/>
</dbReference>
<reference key="1">
    <citation type="journal article" date="2006" name="Genome Res.">
        <title>Skewed genomic variability in strains of the toxigenic bacterial pathogen, Clostridium perfringens.</title>
        <authorList>
            <person name="Myers G.S.A."/>
            <person name="Rasko D.A."/>
            <person name="Cheung J.K."/>
            <person name="Ravel J."/>
            <person name="Seshadri R."/>
            <person name="DeBoy R.T."/>
            <person name="Ren Q."/>
            <person name="Varga J."/>
            <person name="Awad M.M."/>
            <person name="Brinkac L.M."/>
            <person name="Daugherty S.C."/>
            <person name="Haft D.H."/>
            <person name="Dodson R.J."/>
            <person name="Madupu R."/>
            <person name="Nelson W.C."/>
            <person name="Rosovitz M.J."/>
            <person name="Sullivan S.A."/>
            <person name="Khouri H."/>
            <person name="Dimitrov G.I."/>
            <person name="Watkins K.L."/>
            <person name="Mulligan S."/>
            <person name="Benton J."/>
            <person name="Radune D."/>
            <person name="Fisher D.J."/>
            <person name="Atkins H.S."/>
            <person name="Hiscox T."/>
            <person name="Jost B.H."/>
            <person name="Billington S.J."/>
            <person name="Songer J.G."/>
            <person name="McClane B.A."/>
            <person name="Titball R.W."/>
            <person name="Rood J.I."/>
            <person name="Melville S.B."/>
            <person name="Paulsen I.T."/>
        </authorList>
    </citation>
    <scope>NUCLEOTIDE SEQUENCE [LARGE SCALE GENOMIC DNA]</scope>
    <source>
        <strain>SM101 / Type A</strain>
    </source>
</reference>
<evidence type="ECO:0000255" key="1">
    <source>
        <dbReference type="HAMAP-Rule" id="MF_00375"/>
    </source>
</evidence>
<comment type="catalytic activity">
    <reaction evidence="1">
        <text>(S)-4-amino-5-oxopentanoate = 5-aminolevulinate</text>
        <dbReference type="Rhea" id="RHEA:14265"/>
        <dbReference type="ChEBI" id="CHEBI:57501"/>
        <dbReference type="ChEBI" id="CHEBI:356416"/>
        <dbReference type="EC" id="5.4.3.8"/>
    </reaction>
</comment>
<comment type="cofactor">
    <cofactor evidence="1">
        <name>pyridoxal 5'-phosphate</name>
        <dbReference type="ChEBI" id="CHEBI:597326"/>
    </cofactor>
</comment>
<comment type="pathway">
    <text evidence="1">Porphyrin-containing compound metabolism; protoporphyrin-IX biosynthesis; 5-aminolevulinate from L-glutamyl-tRNA(Glu): step 2/2.</text>
</comment>
<comment type="subunit">
    <text evidence="1">Homodimer.</text>
</comment>
<comment type="subcellular location">
    <subcellularLocation>
        <location evidence="1">Cytoplasm</location>
    </subcellularLocation>
</comment>
<comment type="similarity">
    <text evidence="1">Belongs to the class-III pyridoxal-phosphate-dependent aminotransferase family. HemL subfamily.</text>
</comment>
<gene>
    <name evidence="1" type="primary">hemL</name>
    <name type="ordered locus">CPR_1419</name>
</gene>
<protein>
    <recommendedName>
        <fullName evidence="1">Glutamate-1-semialdehyde 2,1-aminomutase</fullName>
        <shortName evidence="1">GSA</shortName>
        <ecNumber evidence="1">5.4.3.8</ecNumber>
    </recommendedName>
    <alternativeName>
        <fullName evidence="1">Glutamate-1-semialdehyde aminotransferase</fullName>
        <shortName evidence="1">GSA-AT</shortName>
    </alternativeName>
</protein>
<feature type="chain" id="PRO_0000300903" description="Glutamate-1-semialdehyde 2,1-aminomutase">
    <location>
        <begin position="1"/>
        <end position="425"/>
    </location>
</feature>
<feature type="modified residue" description="N6-(pyridoxal phosphate)lysine" evidence="1">
    <location>
        <position position="265"/>
    </location>
</feature>
<accession>Q0ST19</accession>